<gene>
    <name evidence="1" type="primary">lgt</name>
    <name type="ordered locus">SAS0726</name>
</gene>
<accession>Q6GB69</accession>
<protein>
    <recommendedName>
        <fullName evidence="1">Phosphatidylglycerol--prolipoprotein diacylglyceryl transferase</fullName>
        <ecNumber evidence="1">2.5.1.145</ecNumber>
    </recommendedName>
</protein>
<organism>
    <name type="scientific">Staphylococcus aureus (strain MSSA476)</name>
    <dbReference type="NCBI Taxonomy" id="282459"/>
    <lineage>
        <taxon>Bacteria</taxon>
        <taxon>Bacillati</taxon>
        <taxon>Bacillota</taxon>
        <taxon>Bacilli</taxon>
        <taxon>Bacillales</taxon>
        <taxon>Staphylococcaceae</taxon>
        <taxon>Staphylococcus</taxon>
    </lineage>
</organism>
<evidence type="ECO:0000255" key="1">
    <source>
        <dbReference type="HAMAP-Rule" id="MF_01147"/>
    </source>
</evidence>
<name>LGT_STAAS</name>
<sequence length="279" mass="31611">MGIVFNYIDPVAFNLGPLSVRWYGIIIAVGILLGYFVAQRALVKAGLHKDTLVDIIFYSALFGFIAARIYFVIFQWPYYVENPSEIIKIWHGGIAIHGGLIGGFIAGVIVCKVKNLNPFQIGDIVAPSIILAQGIGRWGNFMNHEAHGGPVSRAFLEKLHLPNFIIENMYINGQYYHPTFLYESIWDVAGFIILVNIRKHLKLGETFFLYLTWYSIGRFFIEGLRTDSLMLTSNIRVAQLVSILLILISISLIVYRRIKYNPPLYSKVGALPWPTKKVK</sequence>
<comment type="function">
    <text evidence="1">Catalyzes the transfer of the diacylglyceryl group from phosphatidylglycerol to the sulfhydryl group of the N-terminal cysteine of a prolipoprotein, the first step in the formation of mature lipoproteins.</text>
</comment>
<comment type="catalytic activity">
    <reaction evidence="1">
        <text>L-cysteinyl-[prolipoprotein] + a 1,2-diacyl-sn-glycero-3-phospho-(1'-sn-glycerol) = an S-1,2-diacyl-sn-glyceryl-L-cysteinyl-[prolipoprotein] + sn-glycerol 1-phosphate + H(+)</text>
        <dbReference type="Rhea" id="RHEA:56712"/>
        <dbReference type="Rhea" id="RHEA-COMP:14679"/>
        <dbReference type="Rhea" id="RHEA-COMP:14680"/>
        <dbReference type="ChEBI" id="CHEBI:15378"/>
        <dbReference type="ChEBI" id="CHEBI:29950"/>
        <dbReference type="ChEBI" id="CHEBI:57685"/>
        <dbReference type="ChEBI" id="CHEBI:64716"/>
        <dbReference type="ChEBI" id="CHEBI:140658"/>
        <dbReference type="EC" id="2.5.1.145"/>
    </reaction>
</comment>
<comment type="pathway">
    <text evidence="1">Protein modification; lipoprotein biosynthesis (diacylglyceryl transfer).</text>
</comment>
<comment type="subcellular location">
    <subcellularLocation>
        <location evidence="1">Cell membrane</location>
        <topology evidence="1">Multi-pass membrane protein</topology>
    </subcellularLocation>
</comment>
<comment type="similarity">
    <text evidence="1">Belongs to the Lgt family.</text>
</comment>
<keyword id="KW-1003">Cell membrane</keyword>
<keyword id="KW-0472">Membrane</keyword>
<keyword id="KW-0808">Transferase</keyword>
<keyword id="KW-0812">Transmembrane</keyword>
<keyword id="KW-1133">Transmembrane helix</keyword>
<feature type="chain" id="PRO_0000172676" description="Phosphatidylglycerol--prolipoprotein diacylglyceryl transferase">
    <location>
        <begin position="1"/>
        <end position="279"/>
    </location>
</feature>
<feature type="transmembrane region" description="Helical" evidence="1">
    <location>
        <begin position="18"/>
        <end position="38"/>
    </location>
</feature>
<feature type="transmembrane region" description="Helical" evidence="1">
    <location>
        <begin position="55"/>
        <end position="75"/>
    </location>
</feature>
<feature type="transmembrane region" description="Helical" evidence="1">
    <location>
        <begin position="89"/>
        <end position="109"/>
    </location>
</feature>
<feature type="transmembrane region" description="Helical" evidence="1">
    <location>
        <begin position="203"/>
        <end position="223"/>
    </location>
</feature>
<feature type="transmembrane region" description="Helical" evidence="1">
    <location>
        <begin position="235"/>
        <end position="255"/>
    </location>
</feature>
<feature type="binding site" evidence="1">
    <location>
        <position position="137"/>
    </location>
    <ligand>
        <name>a 1,2-diacyl-sn-glycero-3-phospho-(1'-sn-glycerol)</name>
        <dbReference type="ChEBI" id="CHEBI:64716"/>
    </ligand>
</feature>
<proteinExistence type="inferred from homology"/>
<dbReference type="EC" id="2.5.1.145" evidence="1"/>
<dbReference type="EMBL" id="BX571857">
    <property type="protein sequence ID" value="CAG42502.1"/>
    <property type="molecule type" value="Genomic_DNA"/>
</dbReference>
<dbReference type="RefSeq" id="WP_000513312.1">
    <property type="nucleotide sequence ID" value="NC_002953.3"/>
</dbReference>
<dbReference type="SMR" id="Q6GB69"/>
<dbReference type="KEGG" id="sas:SAS0726"/>
<dbReference type="HOGENOM" id="CLU_013386_0_1_9"/>
<dbReference type="UniPathway" id="UPA00664"/>
<dbReference type="GO" id="GO:0005886">
    <property type="term" value="C:plasma membrane"/>
    <property type="evidence" value="ECO:0007669"/>
    <property type="project" value="UniProtKB-SubCell"/>
</dbReference>
<dbReference type="GO" id="GO:0008961">
    <property type="term" value="F:phosphatidylglycerol-prolipoprotein diacylglyceryl transferase activity"/>
    <property type="evidence" value="ECO:0007669"/>
    <property type="project" value="UniProtKB-UniRule"/>
</dbReference>
<dbReference type="GO" id="GO:0042158">
    <property type="term" value="P:lipoprotein biosynthetic process"/>
    <property type="evidence" value="ECO:0007669"/>
    <property type="project" value="UniProtKB-UniRule"/>
</dbReference>
<dbReference type="HAMAP" id="MF_01147">
    <property type="entry name" value="Lgt"/>
    <property type="match status" value="1"/>
</dbReference>
<dbReference type="InterPro" id="IPR001640">
    <property type="entry name" value="Lgt"/>
</dbReference>
<dbReference type="NCBIfam" id="TIGR00544">
    <property type="entry name" value="lgt"/>
    <property type="match status" value="1"/>
</dbReference>
<dbReference type="PANTHER" id="PTHR30589:SF0">
    <property type="entry name" value="PHOSPHATIDYLGLYCEROL--PROLIPOPROTEIN DIACYLGLYCERYL TRANSFERASE"/>
    <property type="match status" value="1"/>
</dbReference>
<dbReference type="PANTHER" id="PTHR30589">
    <property type="entry name" value="PROLIPOPROTEIN DIACYLGLYCERYL TRANSFERASE"/>
    <property type="match status" value="1"/>
</dbReference>
<dbReference type="Pfam" id="PF01790">
    <property type="entry name" value="LGT"/>
    <property type="match status" value="1"/>
</dbReference>
<dbReference type="PROSITE" id="PS01311">
    <property type="entry name" value="LGT"/>
    <property type="match status" value="1"/>
</dbReference>
<reference key="1">
    <citation type="journal article" date="2004" name="Proc. Natl. Acad. Sci. U.S.A.">
        <title>Complete genomes of two clinical Staphylococcus aureus strains: evidence for the rapid evolution of virulence and drug resistance.</title>
        <authorList>
            <person name="Holden M.T.G."/>
            <person name="Feil E.J."/>
            <person name="Lindsay J.A."/>
            <person name="Peacock S.J."/>
            <person name="Day N.P.J."/>
            <person name="Enright M.C."/>
            <person name="Foster T.J."/>
            <person name="Moore C.E."/>
            <person name="Hurst L."/>
            <person name="Atkin R."/>
            <person name="Barron A."/>
            <person name="Bason N."/>
            <person name="Bentley S.D."/>
            <person name="Chillingworth C."/>
            <person name="Chillingworth T."/>
            <person name="Churcher C."/>
            <person name="Clark L."/>
            <person name="Corton C."/>
            <person name="Cronin A."/>
            <person name="Doggett J."/>
            <person name="Dowd L."/>
            <person name="Feltwell T."/>
            <person name="Hance Z."/>
            <person name="Harris B."/>
            <person name="Hauser H."/>
            <person name="Holroyd S."/>
            <person name="Jagels K."/>
            <person name="James K.D."/>
            <person name="Lennard N."/>
            <person name="Line A."/>
            <person name="Mayes R."/>
            <person name="Moule S."/>
            <person name="Mungall K."/>
            <person name="Ormond D."/>
            <person name="Quail M.A."/>
            <person name="Rabbinowitsch E."/>
            <person name="Rutherford K.M."/>
            <person name="Sanders M."/>
            <person name="Sharp S."/>
            <person name="Simmonds M."/>
            <person name="Stevens K."/>
            <person name="Whitehead S."/>
            <person name="Barrell B.G."/>
            <person name="Spratt B.G."/>
            <person name="Parkhill J."/>
        </authorList>
    </citation>
    <scope>NUCLEOTIDE SEQUENCE [LARGE SCALE GENOMIC DNA]</scope>
    <source>
        <strain>MSSA476</strain>
    </source>
</reference>